<protein>
    <recommendedName>
        <fullName>Uncharacterized protein in cycB 3'region</fullName>
    </recommendedName>
    <alternativeName>
        <fullName>ORF2</fullName>
    </alternativeName>
</protein>
<feature type="signal peptide" evidence="1">
    <location>
        <begin position="1"/>
        <end position="20"/>
    </location>
</feature>
<feature type="chain" id="PRO_0000022704" description="Uncharacterized protein in cycB 3'region">
    <location>
        <begin position="21"/>
        <end position="83" status="greater than"/>
    </location>
</feature>
<feature type="non-terminal residue">
    <location>
        <position position="83"/>
    </location>
</feature>
<evidence type="ECO:0000255" key="1"/>
<evidence type="ECO:0000305" key="2"/>
<name>YCY2_PARDE</name>
<keyword id="KW-0732">Signal</keyword>
<sequence>MRRALTLAVLATCAVLPALAQVADLRSKTEFRVCADPAAVPMSSQDGKGFENRIAQLFAEKLGVPVAYTWFPQSRLHPQEPAR</sequence>
<organism>
    <name type="scientific">Paracoccus denitrificans</name>
    <dbReference type="NCBI Taxonomy" id="266"/>
    <lineage>
        <taxon>Bacteria</taxon>
        <taxon>Pseudomonadati</taxon>
        <taxon>Pseudomonadota</taxon>
        <taxon>Alphaproteobacteria</taxon>
        <taxon>Rhodobacterales</taxon>
        <taxon>Paracoccaceae</taxon>
        <taxon>Paracoccus</taxon>
    </lineage>
</organism>
<comment type="similarity">
    <text evidence="2">To P.denitrificans and M.extorquens MoxJ.</text>
</comment>
<reference key="1">
    <citation type="journal article" date="1991" name="J. Bacteriol.">
        <title>Isolation, sequencing, and mutagenesis of the gene encoding cytochrome c553i of Paracoccus denitrificans and characterization of the mutant strain.</title>
        <authorList>
            <person name="Ras J."/>
            <person name="Reijnders W.N.M."/>
            <person name="van Spanning R.J.M."/>
            <person name="Harms N."/>
            <person name="Oltmann L.F."/>
            <person name="Stouthamer A.H."/>
        </authorList>
    </citation>
    <scope>NUCLEOTIDE SEQUENCE [GENOMIC DNA]</scope>
    <source>
        <strain>Pd 1235</strain>
    </source>
</reference>
<accession>P29969</accession>
<dbReference type="EMBL" id="M75583">
    <property type="protein sequence ID" value="AAA25576.1"/>
    <property type="molecule type" value="Genomic_DNA"/>
</dbReference>
<dbReference type="PIR" id="C41378">
    <property type="entry name" value="C41378"/>
</dbReference>
<dbReference type="SMR" id="P29969"/>
<dbReference type="Gene3D" id="3.40.190.10">
    <property type="entry name" value="Periplasmic binding protein-like II"/>
    <property type="match status" value="1"/>
</dbReference>
<dbReference type="SUPFAM" id="SSF53850">
    <property type="entry name" value="Periplasmic binding protein-like II"/>
    <property type="match status" value="1"/>
</dbReference>
<proteinExistence type="inferred from homology"/>